<comment type="function">
    <text evidence="1">Antitoxin component of a type II toxin-antitoxin (TA) system. Functions as an mRNA interferase antitoxin.</text>
</comment>
<comment type="subunit">
    <text evidence="1">Probably forms a complex with the mRNA interferase HigB which inhibits the mRNA interferase activity.</text>
</comment>
<comment type="similarity">
    <text evidence="3">Belongs to the HigA antitoxin family.</text>
</comment>
<gene>
    <name type="primary">higA</name>
    <name type="ordered locus">SF3122</name>
    <name type="ordered locus">S3329</name>
</gene>
<reference key="1">
    <citation type="journal article" date="2002" name="Nucleic Acids Res.">
        <title>Genome sequence of Shigella flexneri 2a: insights into pathogenicity through comparison with genomes of Escherichia coli K12 and O157.</title>
        <authorList>
            <person name="Jin Q."/>
            <person name="Yuan Z."/>
            <person name="Xu J."/>
            <person name="Wang Y."/>
            <person name="Shen Y."/>
            <person name="Lu W."/>
            <person name="Wang J."/>
            <person name="Liu H."/>
            <person name="Yang J."/>
            <person name="Yang F."/>
            <person name="Zhang X."/>
            <person name="Zhang J."/>
            <person name="Yang G."/>
            <person name="Wu H."/>
            <person name="Qu D."/>
            <person name="Dong J."/>
            <person name="Sun L."/>
            <person name="Xue Y."/>
            <person name="Zhao A."/>
            <person name="Gao Y."/>
            <person name="Zhu J."/>
            <person name="Kan B."/>
            <person name="Ding K."/>
            <person name="Chen S."/>
            <person name="Cheng H."/>
            <person name="Yao Z."/>
            <person name="He B."/>
            <person name="Chen R."/>
            <person name="Ma D."/>
            <person name="Qiang B."/>
            <person name="Wen Y."/>
            <person name="Hou Y."/>
            <person name="Yu J."/>
        </authorList>
    </citation>
    <scope>NUCLEOTIDE SEQUENCE [LARGE SCALE GENOMIC DNA]</scope>
    <source>
        <strain>301 / Serotype 2a</strain>
    </source>
</reference>
<reference key="2">
    <citation type="journal article" date="2003" name="Infect. Immun.">
        <title>Complete genome sequence and comparative genomics of Shigella flexneri serotype 2a strain 2457T.</title>
        <authorList>
            <person name="Wei J."/>
            <person name="Goldberg M.B."/>
            <person name="Burland V."/>
            <person name="Venkatesan M.M."/>
            <person name="Deng W."/>
            <person name="Fournier G."/>
            <person name="Mayhew G.F."/>
            <person name="Plunkett G. III"/>
            <person name="Rose D.J."/>
            <person name="Darling A."/>
            <person name="Mau B."/>
            <person name="Perna N.T."/>
            <person name="Payne S.M."/>
            <person name="Runyen-Janecky L.J."/>
            <person name="Zhou S."/>
            <person name="Schwartz D.C."/>
            <person name="Blattner F.R."/>
        </authorList>
    </citation>
    <scope>NUCLEOTIDE SEQUENCE [LARGE SCALE GENOMIC DNA]</scope>
    <source>
        <strain>ATCC 700930 / 2457T / Serotype 2a</strain>
    </source>
</reference>
<evidence type="ECO:0000250" key="1">
    <source>
        <dbReference type="UniProtKB" id="P67701"/>
    </source>
</evidence>
<evidence type="ECO:0000255" key="2">
    <source>
        <dbReference type="PROSITE-ProRule" id="PRU00257"/>
    </source>
</evidence>
<evidence type="ECO:0000305" key="3"/>
<evidence type="ECO:0007829" key="4">
    <source>
        <dbReference type="PDB" id="6IRP"/>
    </source>
</evidence>
<keyword id="KW-0002">3D-structure</keyword>
<keyword id="KW-0238">DNA-binding</keyword>
<keyword id="KW-1185">Reference proteome</keyword>
<keyword id="KW-0678">Repressor</keyword>
<keyword id="KW-1277">Toxin-antitoxin system</keyword>
<keyword id="KW-0804">Transcription</keyword>
<keyword id="KW-0805">Transcription regulation</keyword>
<organism>
    <name type="scientific">Shigella flexneri</name>
    <dbReference type="NCBI Taxonomy" id="623"/>
    <lineage>
        <taxon>Bacteria</taxon>
        <taxon>Pseudomonadati</taxon>
        <taxon>Pseudomonadota</taxon>
        <taxon>Gammaproteobacteria</taxon>
        <taxon>Enterobacterales</taxon>
        <taxon>Enterobacteriaceae</taxon>
        <taxon>Shigella</taxon>
    </lineage>
</organism>
<sequence>MIAIADILQAGEKLTAVAPFLAGIQNEEQYTQALELVDHLLLNDPENPLLDLVCAKITAWEESAPEFAEFNAMAQAMPGGIAVIRTLMDQYGLTLSDLPEIGSKSMVSRVLSGKRKLTLEHAKKLATRFGISPALFID</sequence>
<accession>P67703</accession>
<accession>P42594</accession>
<protein>
    <recommendedName>
        <fullName>Antitoxin HigA</fullName>
    </recommendedName>
</protein>
<name>HIGA_SHIFL</name>
<feature type="chain" id="PRO_0000149765" description="Antitoxin HigA">
    <location>
        <begin position="1"/>
        <end position="138"/>
    </location>
</feature>
<feature type="domain" description="HTH cro/C1-type" evidence="2">
    <location>
        <begin position="84"/>
        <end position="136"/>
    </location>
</feature>
<feature type="DNA-binding region" description="H-T-H motif" evidence="2">
    <location>
        <begin position="95"/>
        <end position="114"/>
    </location>
</feature>
<feature type="helix" evidence="4">
    <location>
        <begin position="4"/>
        <end position="17"/>
    </location>
</feature>
<feature type="helix" evidence="4">
    <location>
        <begin position="19"/>
        <end position="22"/>
    </location>
</feature>
<feature type="helix" evidence="4">
    <location>
        <begin position="27"/>
        <end position="43"/>
    </location>
</feature>
<feature type="helix" evidence="4">
    <location>
        <begin position="49"/>
        <end position="63"/>
    </location>
</feature>
<feature type="helix" evidence="4">
    <location>
        <begin position="65"/>
        <end position="76"/>
    </location>
</feature>
<feature type="helix" evidence="4">
    <location>
        <begin position="80"/>
        <end position="91"/>
    </location>
</feature>
<feature type="turn" evidence="4">
    <location>
        <begin position="99"/>
        <end position="101"/>
    </location>
</feature>
<feature type="helix" evidence="4">
    <location>
        <begin position="104"/>
        <end position="111"/>
    </location>
</feature>
<feature type="helix" evidence="4">
    <location>
        <begin position="119"/>
        <end position="129"/>
    </location>
</feature>
<feature type="helix" evidence="4">
    <location>
        <begin position="133"/>
        <end position="135"/>
    </location>
</feature>
<proteinExistence type="evidence at protein level"/>
<dbReference type="EMBL" id="AE005674">
    <property type="protein sequence ID" value="AAN44594.1"/>
    <property type="molecule type" value="Genomic_DNA"/>
</dbReference>
<dbReference type="EMBL" id="AE014073">
    <property type="protein sequence ID" value="AAP18407.1"/>
    <property type="molecule type" value="Genomic_DNA"/>
</dbReference>
<dbReference type="RefSeq" id="WP_000560266.1">
    <property type="nucleotide sequence ID" value="NZ_WPGW01000031.1"/>
</dbReference>
<dbReference type="PDB" id="5YCL">
    <property type="method" value="X-ray"/>
    <property type="resolution" value="3.10 A"/>
    <property type="chains" value="A/C=4-138"/>
</dbReference>
<dbReference type="PDB" id="6IRP">
    <property type="method" value="X-ray"/>
    <property type="resolution" value="1.95 A"/>
    <property type="chains" value="A/B=1-138"/>
</dbReference>
<dbReference type="PDBsum" id="5YCL"/>
<dbReference type="PDBsum" id="6IRP"/>
<dbReference type="SMR" id="P67703"/>
<dbReference type="STRING" id="198214.SF3122"/>
<dbReference type="PaxDb" id="198214-SF3122"/>
<dbReference type="KEGG" id="sfl:SF3122"/>
<dbReference type="KEGG" id="sfx:S3329"/>
<dbReference type="PATRIC" id="fig|198214.7.peg.3709"/>
<dbReference type="HOGENOM" id="CLU_125852_0_0_6"/>
<dbReference type="Proteomes" id="UP000001006">
    <property type="component" value="Chromosome"/>
</dbReference>
<dbReference type="Proteomes" id="UP000002673">
    <property type="component" value="Chromosome"/>
</dbReference>
<dbReference type="GO" id="GO:0001046">
    <property type="term" value="F:core promoter sequence-specific DNA binding"/>
    <property type="evidence" value="ECO:0007669"/>
    <property type="project" value="TreeGrafter"/>
</dbReference>
<dbReference type="GO" id="GO:0006355">
    <property type="term" value="P:regulation of DNA-templated transcription"/>
    <property type="evidence" value="ECO:0007669"/>
    <property type="project" value="InterPro"/>
</dbReference>
<dbReference type="CDD" id="cd00093">
    <property type="entry name" value="HTH_XRE"/>
    <property type="match status" value="1"/>
</dbReference>
<dbReference type="FunFam" id="1.10.260.40:FF:000026">
    <property type="entry name" value="Predicted DNA-binding transcriptional regulator"/>
    <property type="match status" value="1"/>
</dbReference>
<dbReference type="Gene3D" id="1.10.260.40">
    <property type="entry name" value="lambda repressor-like DNA-binding domains"/>
    <property type="match status" value="1"/>
</dbReference>
<dbReference type="InterPro" id="IPR039060">
    <property type="entry name" value="Antitox_HigA"/>
</dbReference>
<dbReference type="InterPro" id="IPR001387">
    <property type="entry name" value="Cro/C1-type_HTH"/>
</dbReference>
<dbReference type="InterPro" id="IPR010982">
    <property type="entry name" value="Lambda_DNA-bd_dom_sf"/>
</dbReference>
<dbReference type="PANTHER" id="PTHR40455">
    <property type="entry name" value="ANTITOXIN HIGA"/>
    <property type="match status" value="1"/>
</dbReference>
<dbReference type="PANTHER" id="PTHR40455:SF1">
    <property type="entry name" value="ANTITOXIN HIGA"/>
    <property type="match status" value="1"/>
</dbReference>
<dbReference type="Pfam" id="PF01381">
    <property type="entry name" value="HTH_3"/>
    <property type="match status" value="1"/>
</dbReference>
<dbReference type="SMART" id="SM00530">
    <property type="entry name" value="HTH_XRE"/>
    <property type="match status" value="1"/>
</dbReference>
<dbReference type="SUPFAM" id="SSF47413">
    <property type="entry name" value="lambda repressor-like DNA-binding domains"/>
    <property type="match status" value="1"/>
</dbReference>
<dbReference type="PROSITE" id="PS50943">
    <property type="entry name" value="HTH_CROC1"/>
    <property type="match status" value="1"/>
</dbReference>